<accession>A4TQD8</accession>
<sequence>MNNRVHQGHFARKRFGQNFLNDQFVIDSIVSAIHPVPGEAVVEIGPGLGALTEPVAARMDHMTVIELDRDLAARLASHPQLKDKLTIHQQDAMKVNFSELSEQAGQPLRVFGNLPYNISTPLMFHLFSYTDAIRDMHFMLQKEVVNRLVAGPNSKTYGRLTVMAQYYCNVIPVLEVPPTAFTPAPKVDSAVVRLIPHVQMPHPVGDVRMLSRITTQAFNQRRKTVRNSLGDLFTSEQLIELGIDPILRAENISVAQYCKLANWLSAQSTPQK</sequence>
<reference key="1">
    <citation type="submission" date="2007-02" db="EMBL/GenBank/DDBJ databases">
        <title>Complete sequence of chromosome of Yersinia pestis Pestoides F.</title>
        <authorList>
            <consortium name="US DOE Joint Genome Institute"/>
            <person name="Copeland A."/>
            <person name="Lucas S."/>
            <person name="Lapidus A."/>
            <person name="Barry K."/>
            <person name="Detter J.C."/>
            <person name="Glavina del Rio T."/>
            <person name="Hammon N."/>
            <person name="Israni S."/>
            <person name="Dalin E."/>
            <person name="Tice H."/>
            <person name="Pitluck S."/>
            <person name="Di Bartolo G."/>
            <person name="Chain P."/>
            <person name="Malfatti S."/>
            <person name="Shin M."/>
            <person name="Vergez L."/>
            <person name="Schmutz J."/>
            <person name="Larimer F."/>
            <person name="Land M."/>
            <person name="Hauser L."/>
            <person name="Worsham P."/>
            <person name="Chu M."/>
            <person name="Bearden S."/>
            <person name="Garcia E."/>
            <person name="Richardson P."/>
        </authorList>
    </citation>
    <scope>NUCLEOTIDE SEQUENCE [LARGE SCALE GENOMIC DNA]</scope>
    <source>
        <strain>Pestoides F</strain>
    </source>
</reference>
<organism>
    <name type="scientific">Yersinia pestis (strain Pestoides F)</name>
    <dbReference type="NCBI Taxonomy" id="386656"/>
    <lineage>
        <taxon>Bacteria</taxon>
        <taxon>Pseudomonadati</taxon>
        <taxon>Pseudomonadota</taxon>
        <taxon>Gammaproteobacteria</taxon>
        <taxon>Enterobacterales</taxon>
        <taxon>Yersiniaceae</taxon>
        <taxon>Yersinia</taxon>
    </lineage>
</organism>
<protein>
    <recommendedName>
        <fullName evidence="1">Ribosomal RNA small subunit methyltransferase A</fullName>
        <ecNumber evidence="1">2.1.1.182</ecNumber>
    </recommendedName>
    <alternativeName>
        <fullName evidence="1">16S rRNA (adenine(1518)-N(6)/adenine(1519)-N(6))-dimethyltransferase</fullName>
    </alternativeName>
    <alternativeName>
        <fullName evidence="1">16S rRNA dimethyladenosine transferase</fullName>
    </alternativeName>
    <alternativeName>
        <fullName evidence="1">16S rRNA dimethylase</fullName>
    </alternativeName>
    <alternativeName>
        <fullName evidence="1">S-adenosylmethionine-6-N', N'-adenosyl(rRNA) dimethyltransferase</fullName>
    </alternativeName>
</protein>
<comment type="function">
    <text evidence="1">Specifically dimethylates two adjacent adenosines (A1518 and A1519) in the loop of a conserved hairpin near the 3'-end of 16S rRNA in the 30S particle. May play a critical role in biogenesis of 30S subunits.</text>
</comment>
<comment type="catalytic activity">
    <reaction evidence="1">
        <text>adenosine(1518)/adenosine(1519) in 16S rRNA + 4 S-adenosyl-L-methionine = N(6)-dimethyladenosine(1518)/N(6)-dimethyladenosine(1519) in 16S rRNA + 4 S-adenosyl-L-homocysteine + 4 H(+)</text>
        <dbReference type="Rhea" id="RHEA:19609"/>
        <dbReference type="Rhea" id="RHEA-COMP:10232"/>
        <dbReference type="Rhea" id="RHEA-COMP:10233"/>
        <dbReference type="ChEBI" id="CHEBI:15378"/>
        <dbReference type="ChEBI" id="CHEBI:57856"/>
        <dbReference type="ChEBI" id="CHEBI:59789"/>
        <dbReference type="ChEBI" id="CHEBI:74411"/>
        <dbReference type="ChEBI" id="CHEBI:74493"/>
        <dbReference type="EC" id="2.1.1.182"/>
    </reaction>
</comment>
<comment type="subcellular location">
    <subcellularLocation>
        <location evidence="1">Cytoplasm</location>
    </subcellularLocation>
</comment>
<comment type="similarity">
    <text evidence="1">Belongs to the class I-like SAM-binding methyltransferase superfamily. rRNA adenine N(6)-methyltransferase family. RsmA subfamily.</text>
</comment>
<proteinExistence type="inferred from homology"/>
<gene>
    <name evidence="1" type="primary">rsmA</name>
    <name evidence="1" type="synonym">ksgA</name>
    <name type="ordered locus">YPDSF_3142</name>
</gene>
<dbReference type="EC" id="2.1.1.182" evidence="1"/>
<dbReference type="EMBL" id="CP000668">
    <property type="protein sequence ID" value="ABP41500.1"/>
    <property type="molecule type" value="Genomic_DNA"/>
</dbReference>
<dbReference type="RefSeq" id="WP_002210490.1">
    <property type="nucleotide sequence ID" value="NZ_CP009715.1"/>
</dbReference>
<dbReference type="SMR" id="A4TQD8"/>
<dbReference type="GeneID" id="57974118"/>
<dbReference type="KEGG" id="ypp:YPDSF_3142"/>
<dbReference type="PATRIC" id="fig|386656.14.peg.1213"/>
<dbReference type="GO" id="GO:0005829">
    <property type="term" value="C:cytosol"/>
    <property type="evidence" value="ECO:0007669"/>
    <property type="project" value="TreeGrafter"/>
</dbReference>
<dbReference type="GO" id="GO:0052908">
    <property type="term" value="F:16S rRNA (adenine(1518)-N(6)/adenine(1519)-N(6))-dimethyltransferase activity"/>
    <property type="evidence" value="ECO:0007669"/>
    <property type="project" value="UniProtKB-EC"/>
</dbReference>
<dbReference type="GO" id="GO:0003723">
    <property type="term" value="F:RNA binding"/>
    <property type="evidence" value="ECO:0007669"/>
    <property type="project" value="UniProtKB-KW"/>
</dbReference>
<dbReference type="CDD" id="cd02440">
    <property type="entry name" value="AdoMet_MTases"/>
    <property type="match status" value="1"/>
</dbReference>
<dbReference type="FunFam" id="1.10.8.100:FF:000001">
    <property type="entry name" value="Ribosomal RNA small subunit methyltransferase A"/>
    <property type="match status" value="1"/>
</dbReference>
<dbReference type="FunFam" id="3.40.50.150:FF:000006">
    <property type="entry name" value="Ribosomal RNA small subunit methyltransferase A"/>
    <property type="match status" value="1"/>
</dbReference>
<dbReference type="Gene3D" id="1.10.8.100">
    <property type="entry name" value="Ribosomal RNA adenine dimethylase-like, domain 2"/>
    <property type="match status" value="1"/>
</dbReference>
<dbReference type="Gene3D" id="3.40.50.150">
    <property type="entry name" value="Vaccinia Virus protein VP39"/>
    <property type="match status" value="1"/>
</dbReference>
<dbReference type="HAMAP" id="MF_00607">
    <property type="entry name" value="16SrRNA_methyltr_A"/>
    <property type="match status" value="1"/>
</dbReference>
<dbReference type="InterPro" id="IPR001737">
    <property type="entry name" value="KsgA/Erm"/>
</dbReference>
<dbReference type="InterPro" id="IPR023165">
    <property type="entry name" value="rRNA_Ade_diMease-like_C"/>
</dbReference>
<dbReference type="InterPro" id="IPR020596">
    <property type="entry name" value="rRNA_Ade_Mease_Trfase_CS"/>
</dbReference>
<dbReference type="InterPro" id="IPR020598">
    <property type="entry name" value="rRNA_Ade_methylase_Trfase_N"/>
</dbReference>
<dbReference type="InterPro" id="IPR011530">
    <property type="entry name" value="rRNA_adenine_dimethylase"/>
</dbReference>
<dbReference type="InterPro" id="IPR029063">
    <property type="entry name" value="SAM-dependent_MTases_sf"/>
</dbReference>
<dbReference type="NCBIfam" id="TIGR00755">
    <property type="entry name" value="ksgA"/>
    <property type="match status" value="1"/>
</dbReference>
<dbReference type="PANTHER" id="PTHR11727">
    <property type="entry name" value="DIMETHYLADENOSINE TRANSFERASE"/>
    <property type="match status" value="1"/>
</dbReference>
<dbReference type="PANTHER" id="PTHR11727:SF7">
    <property type="entry name" value="DIMETHYLADENOSINE TRANSFERASE-RELATED"/>
    <property type="match status" value="1"/>
</dbReference>
<dbReference type="Pfam" id="PF00398">
    <property type="entry name" value="RrnaAD"/>
    <property type="match status" value="1"/>
</dbReference>
<dbReference type="SMART" id="SM00650">
    <property type="entry name" value="rADc"/>
    <property type="match status" value="1"/>
</dbReference>
<dbReference type="SUPFAM" id="SSF53335">
    <property type="entry name" value="S-adenosyl-L-methionine-dependent methyltransferases"/>
    <property type="match status" value="1"/>
</dbReference>
<dbReference type="PROSITE" id="PS01131">
    <property type="entry name" value="RRNA_A_DIMETH"/>
    <property type="match status" value="1"/>
</dbReference>
<dbReference type="PROSITE" id="PS51689">
    <property type="entry name" value="SAM_RNA_A_N6_MT"/>
    <property type="match status" value="1"/>
</dbReference>
<evidence type="ECO:0000255" key="1">
    <source>
        <dbReference type="HAMAP-Rule" id="MF_00607"/>
    </source>
</evidence>
<name>RSMA_YERPP</name>
<feature type="chain" id="PRO_1000056690" description="Ribosomal RNA small subunit methyltransferase A">
    <location>
        <begin position="1"/>
        <end position="272"/>
    </location>
</feature>
<feature type="binding site" evidence="1">
    <location>
        <position position="18"/>
    </location>
    <ligand>
        <name>S-adenosyl-L-methionine</name>
        <dbReference type="ChEBI" id="CHEBI:59789"/>
    </ligand>
</feature>
<feature type="binding site" evidence="1">
    <location>
        <position position="20"/>
    </location>
    <ligand>
        <name>S-adenosyl-L-methionine</name>
        <dbReference type="ChEBI" id="CHEBI:59789"/>
    </ligand>
</feature>
<feature type="binding site" evidence="1">
    <location>
        <position position="45"/>
    </location>
    <ligand>
        <name>S-adenosyl-L-methionine</name>
        <dbReference type="ChEBI" id="CHEBI:59789"/>
    </ligand>
</feature>
<feature type="binding site" evidence="1">
    <location>
        <position position="66"/>
    </location>
    <ligand>
        <name>S-adenosyl-L-methionine</name>
        <dbReference type="ChEBI" id="CHEBI:59789"/>
    </ligand>
</feature>
<feature type="binding site" evidence="1">
    <location>
        <position position="91"/>
    </location>
    <ligand>
        <name>S-adenosyl-L-methionine</name>
        <dbReference type="ChEBI" id="CHEBI:59789"/>
    </ligand>
</feature>
<feature type="binding site" evidence="1">
    <location>
        <position position="113"/>
    </location>
    <ligand>
        <name>S-adenosyl-L-methionine</name>
        <dbReference type="ChEBI" id="CHEBI:59789"/>
    </ligand>
</feature>
<keyword id="KW-0963">Cytoplasm</keyword>
<keyword id="KW-0489">Methyltransferase</keyword>
<keyword id="KW-0694">RNA-binding</keyword>
<keyword id="KW-0698">rRNA processing</keyword>
<keyword id="KW-0949">S-adenosyl-L-methionine</keyword>
<keyword id="KW-0808">Transferase</keyword>